<gene>
    <name evidence="1" type="primary">hisS</name>
    <name type="ordered locus">Patl_3125</name>
</gene>
<proteinExistence type="inferred from homology"/>
<sequence length="426" mass="48073">MSKQIQAIRGMNDCLPEQSGLWQWAEKAIREVVASYGYQEVRTPIVESTDLFKRSIGEVTDIVEKEMYTFADRNDDSLTLRPEGTASVVRAGNEHGLLYNQQQRLWYLGPMFRHERPQKGRYRQFHQFGVEVFGLAGPDIDAEVIALSARLWKKFGISEQVTLELNSLGSNEARETYRKALVEFLLARKEHLDEDSLRRLESNPLRVLDSKNPQVQAAITDAPSLIDYLDAESKEHFHALCERLDALGIQYRVNPRLVRGLDYYNRTVFEWVTDSLGAQGTVCAGGRYDGLVEQLGGKSTQGVGFAIGMERLVLMLQASGAEEFVASPVDVYVTAMGDEVELYALQIAESLRDVMPTLRVQTHFGGGNFKKQMKRADKSAARVALVLGETEQQEEQVSIKFLREDKPQSRIARSELESTLVELFSL</sequence>
<dbReference type="EC" id="6.1.1.21" evidence="1"/>
<dbReference type="EMBL" id="CP000388">
    <property type="protein sequence ID" value="ABG41631.1"/>
    <property type="molecule type" value="Genomic_DNA"/>
</dbReference>
<dbReference type="RefSeq" id="WP_011575869.1">
    <property type="nucleotide sequence ID" value="NC_008228.1"/>
</dbReference>
<dbReference type="SMR" id="Q15R57"/>
<dbReference type="STRING" id="342610.Patl_3125"/>
<dbReference type="KEGG" id="pat:Patl_3125"/>
<dbReference type="eggNOG" id="COG0124">
    <property type="taxonomic scope" value="Bacteria"/>
</dbReference>
<dbReference type="HOGENOM" id="CLU_025113_1_1_6"/>
<dbReference type="OrthoDB" id="9800814at2"/>
<dbReference type="Proteomes" id="UP000001981">
    <property type="component" value="Chromosome"/>
</dbReference>
<dbReference type="GO" id="GO:0005737">
    <property type="term" value="C:cytoplasm"/>
    <property type="evidence" value="ECO:0007669"/>
    <property type="project" value="UniProtKB-SubCell"/>
</dbReference>
<dbReference type="GO" id="GO:0005524">
    <property type="term" value="F:ATP binding"/>
    <property type="evidence" value="ECO:0007669"/>
    <property type="project" value="UniProtKB-UniRule"/>
</dbReference>
<dbReference type="GO" id="GO:0004821">
    <property type="term" value="F:histidine-tRNA ligase activity"/>
    <property type="evidence" value="ECO:0007669"/>
    <property type="project" value="UniProtKB-UniRule"/>
</dbReference>
<dbReference type="GO" id="GO:0006427">
    <property type="term" value="P:histidyl-tRNA aminoacylation"/>
    <property type="evidence" value="ECO:0007669"/>
    <property type="project" value="UniProtKB-UniRule"/>
</dbReference>
<dbReference type="CDD" id="cd00773">
    <property type="entry name" value="HisRS-like_core"/>
    <property type="match status" value="1"/>
</dbReference>
<dbReference type="CDD" id="cd00859">
    <property type="entry name" value="HisRS_anticodon"/>
    <property type="match status" value="1"/>
</dbReference>
<dbReference type="FunFam" id="3.30.930.10:FF:000005">
    <property type="entry name" value="Histidine--tRNA ligase"/>
    <property type="match status" value="1"/>
</dbReference>
<dbReference type="Gene3D" id="3.40.50.800">
    <property type="entry name" value="Anticodon-binding domain"/>
    <property type="match status" value="1"/>
</dbReference>
<dbReference type="Gene3D" id="3.30.930.10">
    <property type="entry name" value="Bira Bifunctional Protein, Domain 2"/>
    <property type="match status" value="1"/>
</dbReference>
<dbReference type="HAMAP" id="MF_00127">
    <property type="entry name" value="His_tRNA_synth"/>
    <property type="match status" value="1"/>
</dbReference>
<dbReference type="InterPro" id="IPR006195">
    <property type="entry name" value="aa-tRNA-synth_II"/>
</dbReference>
<dbReference type="InterPro" id="IPR045864">
    <property type="entry name" value="aa-tRNA-synth_II/BPL/LPL"/>
</dbReference>
<dbReference type="InterPro" id="IPR004154">
    <property type="entry name" value="Anticodon-bd"/>
</dbReference>
<dbReference type="InterPro" id="IPR036621">
    <property type="entry name" value="Anticodon-bd_dom_sf"/>
</dbReference>
<dbReference type="InterPro" id="IPR015807">
    <property type="entry name" value="His-tRNA-ligase"/>
</dbReference>
<dbReference type="InterPro" id="IPR041715">
    <property type="entry name" value="HisRS-like_core"/>
</dbReference>
<dbReference type="InterPro" id="IPR004516">
    <property type="entry name" value="HisRS/HisZ"/>
</dbReference>
<dbReference type="InterPro" id="IPR033656">
    <property type="entry name" value="HisRS_anticodon"/>
</dbReference>
<dbReference type="NCBIfam" id="TIGR00442">
    <property type="entry name" value="hisS"/>
    <property type="match status" value="1"/>
</dbReference>
<dbReference type="PANTHER" id="PTHR43707:SF1">
    <property type="entry name" value="HISTIDINE--TRNA LIGASE, MITOCHONDRIAL-RELATED"/>
    <property type="match status" value="1"/>
</dbReference>
<dbReference type="PANTHER" id="PTHR43707">
    <property type="entry name" value="HISTIDYL-TRNA SYNTHETASE"/>
    <property type="match status" value="1"/>
</dbReference>
<dbReference type="Pfam" id="PF03129">
    <property type="entry name" value="HGTP_anticodon"/>
    <property type="match status" value="1"/>
</dbReference>
<dbReference type="Pfam" id="PF13393">
    <property type="entry name" value="tRNA-synt_His"/>
    <property type="match status" value="1"/>
</dbReference>
<dbReference type="PIRSF" id="PIRSF001549">
    <property type="entry name" value="His-tRNA_synth"/>
    <property type="match status" value="1"/>
</dbReference>
<dbReference type="SUPFAM" id="SSF52954">
    <property type="entry name" value="Class II aaRS ABD-related"/>
    <property type="match status" value="1"/>
</dbReference>
<dbReference type="SUPFAM" id="SSF55681">
    <property type="entry name" value="Class II aaRS and biotin synthetases"/>
    <property type="match status" value="1"/>
</dbReference>
<dbReference type="PROSITE" id="PS50862">
    <property type="entry name" value="AA_TRNA_LIGASE_II"/>
    <property type="match status" value="1"/>
</dbReference>
<feature type="chain" id="PRO_1000016416" description="Histidine--tRNA ligase">
    <location>
        <begin position="1"/>
        <end position="426"/>
    </location>
</feature>
<reference key="1">
    <citation type="submission" date="2006-06" db="EMBL/GenBank/DDBJ databases">
        <title>Complete sequence of Pseudoalteromonas atlantica T6c.</title>
        <authorList>
            <consortium name="US DOE Joint Genome Institute"/>
            <person name="Copeland A."/>
            <person name="Lucas S."/>
            <person name="Lapidus A."/>
            <person name="Barry K."/>
            <person name="Detter J.C."/>
            <person name="Glavina del Rio T."/>
            <person name="Hammon N."/>
            <person name="Israni S."/>
            <person name="Dalin E."/>
            <person name="Tice H."/>
            <person name="Pitluck S."/>
            <person name="Saunders E."/>
            <person name="Brettin T."/>
            <person name="Bruce D."/>
            <person name="Han C."/>
            <person name="Tapia R."/>
            <person name="Gilna P."/>
            <person name="Schmutz J."/>
            <person name="Larimer F."/>
            <person name="Land M."/>
            <person name="Hauser L."/>
            <person name="Kyrpides N."/>
            <person name="Kim E."/>
            <person name="Karls A.C."/>
            <person name="Bartlett D."/>
            <person name="Higgins B.P."/>
            <person name="Richardson P."/>
        </authorList>
    </citation>
    <scope>NUCLEOTIDE SEQUENCE [LARGE SCALE GENOMIC DNA]</scope>
    <source>
        <strain>T6c / ATCC BAA-1087</strain>
    </source>
</reference>
<keyword id="KW-0030">Aminoacyl-tRNA synthetase</keyword>
<keyword id="KW-0067">ATP-binding</keyword>
<keyword id="KW-0963">Cytoplasm</keyword>
<keyword id="KW-0436">Ligase</keyword>
<keyword id="KW-0547">Nucleotide-binding</keyword>
<keyword id="KW-0648">Protein biosynthesis</keyword>
<accession>Q15R57</accession>
<protein>
    <recommendedName>
        <fullName evidence="1">Histidine--tRNA ligase</fullName>
        <ecNumber evidence="1">6.1.1.21</ecNumber>
    </recommendedName>
    <alternativeName>
        <fullName evidence="1">Histidyl-tRNA synthetase</fullName>
        <shortName evidence="1">HisRS</shortName>
    </alternativeName>
</protein>
<name>SYH_PSEA6</name>
<organism>
    <name type="scientific">Pseudoalteromonas atlantica (strain T6c / ATCC BAA-1087)</name>
    <dbReference type="NCBI Taxonomy" id="3042615"/>
    <lineage>
        <taxon>Bacteria</taxon>
        <taxon>Pseudomonadati</taxon>
        <taxon>Pseudomonadota</taxon>
        <taxon>Gammaproteobacteria</taxon>
        <taxon>Alteromonadales</taxon>
        <taxon>Alteromonadaceae</taxon>
        <taxon>Paraglaciecola</taxon>
    </lineage>
</organism>
<comment type="catalytic activity">
    <reaction evidence="1">
        <text>tRNA(His) + L-histidine + ATP = L-histidyl-tRNA(His) + AMP + diphosphate + H(+)</text>
        <dbReference type="Rhea" id="RHEA:17313"/>
        <dbReference type="Rhea" id="RHEA-COMP:9665"/>
        <dbReference type="Rhea" id="RHEA-COMP:9689"/>
        <dbReference type="ChEBI" id="CHEBI:15378"/>
        <dbReference type="ChEBI" id="CHEBI:30616"/>
        <dbReference type="ChEBI" id="CHEBI:33019"/>
        <dbReference type="ChEBI" id="CHEBI:57595"/>
        <dbReference type="ChEBI" id="CHEBI:78442"/>
        <dbReference type="ChEBI" id="CHEBI:78527"/>
        <dbReference type="ChEBI" id="CHEBI:456215"/>
        <dbReference type="EC" id="6.1.1.21"/>
    </reaction>
</comment>
<comment type="subunit">
    <text evidence="1">Homodimer.</text>
</comment>
<comment type="subcellular location">
    <subcellularLocation>
        <location evidence="1">Cytoplasm</location>
    </subcellularLocation>
</comment>
<comment type="similarity">
    <text evidence="1">Belongs to the class-II aminoacyl-tRNA synthetase family.</text>
</comment>
<evidence type="ECO:0000255" key="1">
    <source>
        <dbReference type="HAMAP-Rule" id="MF_00127"/>
    </source>
</evidence>